<dbReference type="EC" id="2.7.11.1"/>
<dbReference type="EMBL" id="U45981">
    <property type="protein sequence ID" value="AAA87575.1"/>
    <property type="molecule type" value="Genomic_DNA"/>
</dbReference>
<dbReference type="EMBL" id="CU329670">
    <property type="protein sequence ID" value="CAA92237.1"/>
    <property type="molecule type" value="Genomic_DNA"/>
</dbReference>
<dbReference type="PIR" id="T38086">
    <property type="entry name" value="T38086"/>
</dbReference>
<dbReference type="RefSeq" id="NP_592864.1">
    <property type="nucleotide sequence ID" value="NM_001018264.1"/>
</dbReference>
<dbReference type="SMR" id="Q10056"/>
<dbReference type="BioGRID" id="277970">
    <property type="interactions" value="49"/>
</dbReference>
<dbReference type="FunCoup" id="Q10056">
    <property type="interactions" value="390"/>
</dbReference>
<dbReference type="STRING" id="284812.Q10056"/>
<dbReference type="PaxDb" id="4896-SPAC1F5.09c.1"/>
<dbReference type="EnsemblFungi" id="SPAC1F5.09c.1">
    <property type="protein sequence ID" value="SPAC1F5.09c.1:pep"/>
    <property type="gene ID" value="SPAC1F5.09c"/>
</dbReference>
<dbReference type="GeneID" id="2541468"/>
<dbReference type="KEGG" id="spo:2541468"/>
<dbReference type="PomBase" id="SPAC1F5.09c">
    <property type="gene designation" value="shk2"/>
</dbReference>
<dbReference type="VEuPathDB" id="FungiDB:SPAC1F5.09c"/>
<dbReference type="eggNOG" id="KOG0578">
    <property type="taxonomic scope" value="Eukaryota"/>
</dbReference>
<dbReference type="HOGENOM" id="CLU_000288_26_2_1"/>
<dbReference type="InParanoid" id="Q10056"/>
<dbReference type="OMA" id="TNFFHEV"/>
<dbReference type="PhylomeDB" id="Q10056"/>
<dbReference type="BRENDA" id="2.7.11.1">
    <property type="organism ID" value="5613"/>
</dbReference>
<dbReference type="Reactome" id="R-SPO-389359">
    <property type="pathway name" value="CD28 dependent Vav1 pathway"/>
</dbReference>
<dbReference type="Reactome" id="R-SPO-5627123">
    <property type="pathway name" value="RHO GTPases activate PAKs"/>
</dbReference>
<dbReference type="Reactome" id="R-SPO-5687128">
    <property type="pathway name" value="MAPK6/MAPK4 signaling"/>
</dbReference>
<dbReference type="Reactome" id="R-SPO-9013405">
    <property type="pathway name" value="RHOD GTPase cycle"/>
</dbReference>
<dbReference type="Reactome" id="R-SPO-9013406">
    <property type="pathway name" value="RHOQ GTPase cycle"/>
</dbReference>
<dbReference type="Reactome" id="R-SPO-9013420">
    <property type="pathway name" value="RHOU GTPase cycle"/>
</dbReference>
<dbReference type="Reactome" id="R-SPO-9013424">
    <property type="pathway name" value="RHOV GTPase cycle"/>
</dbReference>
<dbReference type="PRO" id="PR:Q10056"/>
<dbReference type="Proteomes" id="UP000002485">
    <property type="component" value="Chromosome I"/>
</dbReference>
<dbReference type="GO" id="GO:0005737">
    <property type="term" value="C:cytoplasm"/>
    <property type="evidence" value="ECO:0000318"/>
    <property type="project" value="GO_Central"/>
</dbReference>
<dbReference type="GO" id="GO:0005829">
    <property type="term" value="C:cytosol"/>
    <property type="evidence" value="ECO:0000314"/>
    <property type="project" value="PomBase"/>
</dbReference>
<dbReference type="GO" id="GO:0016020">
    <property type="term" value="C:membrane"/>
    <property type="evidence" value="ECO:0000314"/>
    <property type="project" value="PomBase"/>
</dbReference>
<dbReference type="GO" id="GO:0005739">
    <property type="term" value="C:mitochondrion"/>
    <property type="evidence" value="ECO:0007005"/>
    <property type="project" value="PomBase"/>
</dbReference>
<dbReference type="GO" id="GO:0005524">
    <property type="term" value="F:ATP binding"/>
    <property type="evidence" value="ECO:0000255"/>
    <property type="project" value="PomBase"/>
</dbReference>
<dbReference type="GO" id="GO:0008289">
    <property type="term" value="F:lipid binding"/>
    <property type="evidence" value="ECO:0000255"/>
    <property type="project" value="PomBase"/>
</dbReference>
<dbReference type="GO" id="GO:0106310">
    <property type="term" value="F:protein serine kinase activity"/>
    <property type="evidence" value="ECO:0007669"/>
    <property type="project" value="RHEA"/>
</dbReference>
<dbReference type="GO" id="GO:0004674">
    <property type="term" value="F:protein serine/threonine kinase activity"/>
    <property type="evidence" value="ECO:0000314"/>
    <property type="project" value="PomBase"/>
</dbReference>
<dbReference type="GO" id="GO:0009267">
    <property type="term" value="P:cellular response to starvation"/>
    <property type="evidence" value="ECO:0000318"/>
    <property type="project" value="GO_Central"/>
</dbReference>
<dbReference type="GO" id="GO:0035556">
    <property type="term" value="P:intracellular signal transduction"/>
    <property type="evidence" value="ECO:0000318"/>
    <property type="project" value="GO_Central"/>
</dbReference>
<dbReference type="GO" id="GO:0032220">
    <property type="term" value="P:plasma membrane fusion involved in cytogamy"/>
    <property type="evidence" value="ECO:0000315"/>
    <property type="project" value="PomBase"/>
</dbReference>
<dbReference type="GO" id="GO:0043408">
    <property type="term" value="P:regulation of MAPK cascade"/>
    <property type="evidence" value="ECO:0000318"/>
    <property type="project" value="GO_Central"/>
</dbReference>
<dbReference type="CDD" id="cd01093">
    <property type="entry name" value="CRIB_PAK_like"/>
    <property type="match status" value="1"/>
</dbReference>
<dbReference type="CDD" id="cd13279">
    <property type="entry name" value="PH_Cla4_Ste20"/>
    <property type="match status" value="1"/>
</dbReference>
<dbReference type="CDD" id="cd06614">
    <property type="entry name" value="STKc_PAK"/>
    <property type="match status" value="1"/>
</dbReference>
<dbReference type="FunFam" id="1.10.510.10:FF:000139">
    <property type="entry name" value="Non-specific serine/threonine protein kinase"/>
    <property type="match status" value="1"/>
</dbReference>
<dbReference type="FunFam" id="3.90.810.10:FF:000005">
    <property type="entry name" value="Non-specific serine/threonine protein kinase"/>
    <property type="match status" value="1"/>
</dbReference>
<dbReference type="Gene3D" id="3.90.810.10">
    <property type="entry name" value="CRIB domain"/>
    <property type="match status" value="1"/>
</dbReference>
<dbReference type="Gene3D" id="3.30.200.20">
    <property type="entry name" value="Phosphorylase Kinase, domain 1"/>
    <property type="match status" value="1"/>
</dbReference>
<dbReference type="Gene3D" id="2.30.29.30">
    <property type="entry name" value="Pleckstrin-homology domain (PH domain)/Phosphotyrosine-binding domain (PTB)"/>
    <property type="match status" value="1"/>
</dbReference>
<dbReference type="Gene3D" id="1.10.510.10">
    <property type="entry name" value="Transferase(Phosphotransferase) domain 1"/>
    <property type="match status" value="1"/>
</dbReference>
<dbReference type="InterPro" id="IPR000095">
    <property type="entry name" value="CRIB_dom"/>
</dbReference>
<dbReference type="InterPro" id="IPR036936">
    <property type="entry name" value="CRIB_dom_sf"/>
</dbReference>
<dbReference type="InterPro" id="IPR011009">
    <property type="entry name" value="Kinase-like_dom_sf"/>
</dbReference>
<dbReference type="InterPro" id="IPR051931">
    <property type="entry name" value="PAK3-like"/>
</dbReference>
<dbReference type="InterPro" id="IPR033923">
    <property type="entry name" value="PAK_BD"/>
</dbReference>
<dbReference type="InterPro" id="IPR011993">
    <property type="entry name" value="PH-like_dom_sf"/>
</dbReference>
<dbReference type="InterPro" id="IPR001849">
    <property type="entry name" value="PH_domain"/>
</dbReference>
<dbReference type="InterPro" id="IPR000719">
    <property type="entry name" value="Prot_kinase_dom"/>
</dbReference>
<dbReference type="InterPro" id="IPR017441">
    <property type="entry name" value="Protein_kinase_ATP_BS"/>
</dbReference>
<dbReference type="InterPro" id="IPR008271">
    <property type="entry name" value="Ser/Thr_kinase_AS"/>
</dbReference>
<dbReference type="PANTHER" id="PTHR45832">
    <property type="entry name" value="SERINE/THREONINE-PROTEIN KINASE SAMKA-RELATED-RELATED"/>
    <property type="match status" value="1"/>
</dbReference>
<dbReference type="PANTHER" id="PTHR45832:SF22">
    <property type="entry name" value="SERINE_THREONINE-PROTEIN KINASE SAMKA-RELATED"/>
    <property type="match status" value="1"/>
</dbReference>
<dbReference type="Pfam" id="PF00786">
    <property type="entry name" value="PBD"/>
    <property type="match status" value="1"/>
</dbReference>
<dbReference type="Pfam" id="PF00169">
    <property type="entry name" value="PH"/>
    <property type="match status" value="1"/>
</dbReference>
<dbReference type="Pfam" id="PF00069">
    <property type="entry name" value="Pkinase"/>
    <property type="match status" value="1"/>
</dbReference>
<dbReference type="SMART" id="SM00285">
    <property type="entry name" value="PBD"/>
    <property type="match status" value="1"/>
</dbReference>
<dbReference type="SMART" id="SM00233">
    <property type="entry name" value="PH"/>
    <property type="match status" value="1"/>
</dbReference>
<dbReference type="SMART" id="SM00220">
    <property type="entry name" value="S_TKc"/>
    <property type="match status" value="1"/>
</dbReference>
<dbReference type="SUPFAM" id="SSF50729">
    <property type="entry name" value="PH domain-like"/>
    <property type="match status" value="1"/>
</dbReference>
<dbReference type="SUPFAM" id="SSF56112">
    <property type="entry name" value="Protein kinase-like (PK-like)"/>
    <property type="match status" value="1"/>
</dbReference>
<dbReference type="PROSITE" id="PS50108">
    <property type="entry name" value="CRIB"/>
    <property type="match status" value="1"/>
</dbReference>
<dbReference type="PROSITE" id="PS50003">
    <property type="entry name" value="PH_DOMAIN"/>
    <property type="match status" value="1"/>
</dbReference>
<dbReference type="PROSITE" id="PS00107">
    <property type="entry name" value="PROTEIN_KINASE_ATP"/>
    <property type="match status" value="1"/>
</dbReference>
<dbReference type="PROSITE" id="PS50011">
    <property type="entry name" value="PROTEIN_KINASE_DOM"/>
    <property type="match status" value="1"/>
</dbReference>
<dbReference type="PROSITE" id="PS00108">
    <property type="entry name" value="PROTEIN_KINASE_ST"/>
    <property type="match status" value="1"/>
</dbReference>
<sequence>MLLSVRGVPVEIPSLKDTKKSKGIIRSGWVMLKEDKMKYLPWTKKWLVLSSNSLSIYKGSKSESAQVTLLLKDIQKVERSKSRTFCFKLRFKSSTKNFEIQACELSVADNMECYEWMDLISSRALASKVSSPMNPKHQVHVGIDNEGNYVGLPKEWILLLQSSSITKQECMEEPKAVIQALDFYSKQLDTTSETKDSFSFCKETLPRSSTTSYSIRDADKHHKLTTSGVTKMNITERCKPKTTIQTDKKHIIRPFIEDKSHVESIMTGKVTKVPVKADSKNTLSRRMTDRQALAMLKDSVTSHDPVEYFNVKHKLGQGASGSVYLAKVVGGKQLGIFDSVAIKSIDLQCQTRKELILNEITVMRESIHPNIVTYLDSFLVRERHLWVVMEYMNAGSLTDIIEKSKLTEAQIARICLETCKGIQHLHARNIIHRDIKSDNVLLDNSGNIKITDFGFCARLSNRTNKRVTMVGTPYWMAPEVVKQNEYGTKVDIWSLGIMIIEMIENEPPYLREDPIRALYLIAKNGTPTLKKPNLVSKNLKSFLNSCLTIDTIFRATAAELLTHSFLNQACPTEDLKSIIFSRKANTHIN</sequence>
<evidence type="ECO:0000255" key="1">
    <source>
        <dbReference type="PROSITE-ProRule" id="PRU00057"/>
    </source>
</evidence>
<evidence type="ECO:0000255" key="2">
    <source>
        <dbReference type="PROSITE-ProRule" id="PRU00145"/>
    </source>
</evidence>
<evidence type="ECO:0000255" key="3">
    <source>
        <dbReference type="PROSITE-ProRule" id="PRU00159"/>
    </source>
</evidence>
<evidence type="ECO:0000255" key="4">
    <source>
        <dbReference type="PROSITE-ProRule" id="PRU10027"/>
    </source>
</evidence>
<evidence type="ECO:0000305" key="5"/>
<proteinExistence type="inferred from homology"/>
<gene>
    <name type="primary">shk2</name>
    <name type="ORF">SPAC1F5.09c</name>
</gene>
<keyword id="KW-0067">ATP-binding</keyword>
<keyword id="KW-0418">Kinase</keyword>
<keyword id="KW-0547">Nucleotide-binding</keyword>
<keyword id="KW-1185">Reference proteome</keyword>
<keyword id="KW-0723">Serine/threonine-protein kinase</keyword>
<keyword id="KW-0808">Transferase</keyword>
<comment type="function">
    <text>Forms an activated complex with GTP-bound Ras-like cdc42. Participates in Ras-dependent morphological control and mating response pathways.</text>
</comment>
<comment type="catalytic activity">
    <reaction>
        <text>L-seryl-[protein] + ATP = O-phospho-L-seryl-[protein] + ADP + H(+)</text>
        <dbReference type="Rhea" id="RHEA:17989"/>
        <dbReference type="Rhea" id="RHEA-COMP:9863"/>
        <dbReference type="Rhea" id="RHEA-COMP:11604"/>
        <dbReference type="ChEBI" id="CHEBI:15378"/>
        <dbReference type="ChEBI" id="CHEBI:29999"/>
        <dbReference type="ChEBI" id="CHEBI:30616"/>
        <dbReference type="ChEBI" id="CHEBI:83421"/>
        <dbReference type="ChEBI" id="CHEBI:456216"/>
        <dbReference type="EC" id="2.7.11.1"/>
    </reaction>
</comment>
<comment type="catalytic activity">
    <reaction>
        <text>L-threonyl-[protein] + ATP = O-phospho-L-threonyl-[protein] + ADP + H(+)</text>
        <dbReference type="Rhea" id="RHEA:46608"/>
        <dbReference type="Rhea" id="RHEA-COMP:11060"/>
        <dbReference type="Rhea" id="RHEA-COMP:11605"/>
        <dbReference type="ChEBI" id="CHEBI:15378"/>
        <dbReference type="ChEBI" id="CHEBI:30013"/>
        <dbReference type="ChEBI" id="CHEBI:30616"/>
        <dbReference type="ChEBI" id="CHEBI:61977"/>
        <dbReference type="ChEBI" id="CHEBI:456216"/>
        <dbReference type="EC" id="2.7.11.1"/>
    </reaction>
</comment>
<comment type="similarity">
    <text evidence="5">Belongs to the protein kinase superfamily. STE Ser/Thr protein kinase family. STE20 subfamily.</text>
</comment>
<reference key="1">
    <citation type="journal article" date="1998" name="J. Biol. Chem.">
        <title>Cloning and characterization of shk2, a gene encoding a novel p21-activated protein kinase from fission yeast.</title>
        <authorList>
            <person name="Yang P."/>
            <person name="Kansra S."/>
            <person name="Pimental R.A."/>
            <person name="Gilbreth M."/>
            <person name="Marcus S."/>
        </authorList>
    </citation>
    <scope>NUCLEOTIDE SEQUENCE [GENOMIC DNA]</scope>
</reference>
<reference key="2">
    <citation type="journal article" date="2002" name="Nature">
        <title>The genome sequence of Schizosaccharomyces pombe.</title>
        <authorList>
            <person name="Wood V."/>
            <person name="Gwilliam R."/>
            <person name="Rajandream M.A."/>
            <person name="Lyne M.H."/>
            <person name="Lyne R."/>
            <person name="Stewart A."/>
            <person name="Sgouros J.G."/>
            <person name="Peat N."/>
            <person name="Hayles J."/>
            <person name="Baker S.G."/>
            <person name="Basham D."/>
            <person name="Bowman S."/>
            <person name="Brooks K."/>
            <person name="Brown D."/>
            <person name="Brown S."/>
            <person name="Chillingworth T."/>
            <person name="Churcher C.M."/>
            <person name="Collins M."/>
            <person name="Connor R."/>
            <person name="Cronin A."/>
            <person name="Davis P."/>
            <person name="Feltwell T."/>
            <person name="Fraser A."/>
            <person name="Gentles S."/>
            <person name="Goble A."/>
            <person name="Hamlin N."/>
            <person name="Harris D.E."/>
            <person name="Hidalgo J."/>
            <person name="Hodgson G."/>
            <person name="Holroyd S."/>
            <person name="Hornsby T."/>
            <person name="Howarth S."/>
            <person name="Huckle E.J."/>
            <person name="Hunt S."/>
            <person name="Jagels K."/>
            <person name="James K.D."/>
            <person name="Jones L."/>
            <person name="Jones M."/>
            <person name="Leather S."/>
            <person name="McDonald S."/>
            <person name="McLean J."/>
            <person name="Mooney P."/>
            <person name="Moule S."/>
            <person name="Mungall K.L."/>
            <person name="Murphy L.D."/>
            <person name="Niblett D."/>
            <person name="Odell C."/>
            <person name="Oliver K."/>
            <person name="O'Neil S."/>
            <person name="Pearson D."/>
            <person name="Quail M.A."/>
            <person name="Rabbinowitsch E."/>
            <person name="Rutherford K.M."/>
            <person name="Rutter S."/>
            <person name="Saunders D."/>
            <person name="Seeger K."/>
            <person name="Sharp S."/>
            <person name="Skelton J."/>
            <person name="Simmonds M.N."/>
            <person name="Squares R."/>
            <person name="Squares S."/>
            <person name="Stevens K."/>
            <person name="Taylor K."/>
            <person name="Taylor R.G."/>
            <person name="Tivey A."/>
            <person name="Walsh S.V."/>
            <person name="Warren T."/>
            <person name="Whitehead S."/>
            <person name="Woodward J.R."/>
            <person name="Volckaert G."/>
            <person name="Aert R."/>
            <person name="Robben J."/>
            <person name="Grymonprez B."/>
            <person name="Weltjens I."/>
            <person name="Vanstreels E."/>
            <person name="Rieger M."/>
            <person name="Schaefer M."/>
            <person name="Mueller-Auer S."/>
            <person name="Gabel C."/>
            <person name="Fuchs M."/>
            <person name="Duesterhoeft A."/>
            <person name="Fritzc C."/>
            <person name="Holzer E."/>
            <person name="Moestl D."/>
            <person name="Hilbert H."/>
            <person name="Borzym K."/>
            <person name="Langer I."/>
            <person name="Beck A."/>
            <person name="Lehrach H."/>
            <person name="Reinhardt R."/>
            <person name="Pohl T.M."/>
            <person name="Eger P."/>
            <person name="Zimmermann W."/>
            <person name="Wedler H."/>
            <person name="Wambutt R."/>
            <person name="Purnelle B."/>
            <person name="Goffeau A."/>
            <person name="Cadieu E."/>
            <person name="Dreano S."/>
            <person name="Gloux S."/>
            <person name="Lelaure V."/>
            <person name="Mottier S."/>
            <person name="Galibert F."/>
            <person name="Aves S.J."/>
            <person name="Xiang Z."/>
            <person name="Hunt C."/>
            <person name="Moore K."/>
            <person name="Hurst S.M."/>
            <person name="Lucas M."/>
            <person name="Rochet M."/>
            <person name="Gaillardin C."/>
            <person name="Tallada V.A."/>
            <person name="Garzon A."/>
            <person name="Thode G."/>
            <person name="Daga R.R."/>
            <person name="Cruzado L."/>
            <person name="Jimenez J."/>
            <person name="Sanchez M."/>
            <person name="del Rey F."/>
            <person name="Benito J."/>
            <person name="Dominguez A."/>
            <person name="Revuelta J.L."/>
            <person name="Moreno S."/>
            <person name="Armstrong J."/>
            <person name="Forsburg S.L."/>
            <person name="Cerutti L."/>
            <person name="Lowe T."/>
            <person name="McCombie W.R."/>
            <person name="Paulsen I."/>
            <person name="Potashkin J."/>
            <person name="Shpakovski G.V."/>
            <person name="Ussery D."/>
            <person name="Barrell B.G."/>
            <person name="Nurse P."/>
        </authorList>
    </citation>
    <scope>NUCLEOTIDE SEQUENCE [LARGE SCALE GENOMIC DNA]</scope>
    <source>
        <strain>972 / ATCC 24843</strain>
    </source>
</reference>
<accession>Q10056</accession>
<organism>
    <name type="scientific">Schizosaccharomyces pombe (strain 972 / ATCC 24843)</name>
    <name type="common">Fission yeast</name>
    <dbReference type="NCBI Taxonomy" id="284812"/>
    <lineage>
        <taxon>Eukaryota</taxon>
        <taxon>Fungi</taxon>
        <taxon>Dikarya</taxon>
        <taxon>Ascomycota</taxon>
        <taxon>Taphrinomycotina</taxon>
        <taxon>Schizosaccharomycetes</taxon>
        <taxon>Schizosaccharomycetales</taxon>
        <taxon>Schizosaccharomycetaceae</taxon>
        <taxon>Schizosaccharomyces</taxon>
    </lineage>
</organism>
<name>SHK2_SCHPO</name>
<protein>
    <recommendedName>
        <fullName>Serine/threonine-protein kinase shk2</fullName>
        <ecNumber>2.7.11.1</ecNumber>
    </recommendedName>
</protein>
<feature type="chain" id="PRO_0000086652" description="Serine/threonine-protein kinase shk2">
    <location>
        <begin position="1"/>
        <end position="589"/>
    </location>
</feature>
<feature type="domain" description="PH" evidence="2">
    <location>
        <begin position="23"/>
        <end position="125"/>
    </location>
</feature>
<feature type="domain" description="CRIB" evidence="1">
    <location>
        <begin position="129"/>
        <end position="142"/>
    </location>
</feature>
<feature type="domain" description="Protein kinase" evidence="3">
    <location>
        <begin position="309"/>
        <end position="566"/>
    </location>
</feature>
<feature type="active site" description="Proton acceptor" evidence="3 4">
    <location>
        <position position="434"/>
    </location>
</feature>
<feature type="binding site" evidence="3">
    <location>
        <begin position="315"/>
        <end position="323"/>
    </location>
    <ligand>
        <name>ATP</name>
        <dbReference type="ChEBI" id="CHEBI:30616"/>
    </ligand>
</feature>
<feature type="binding site" evidence="3">
    <location>
        <position position="343"/>
    </location>
    <ligand>
        <name>ATP</name>
        <dbReference type="ChEBI" id="CHEBI:30616"/>
    </ligand>
</feature>